<proteinExistence type="inferred from homology"/>
<gene>
    <name evidence="1" type="primary">valS</name>
    <name type="ordered locus">PF0290</name>
</gene>
<evidence type="ECO:0000255" key="1">
    <source>
        <dbReference type="HAMAP-Rule" id="MF_02005"/>
    </source>
</evidence>
<dbReference type="EC" id="6.1.1.9" evidence="1"/>
<dbReference type="EMBL" id="AE009950">
    <property type="protein sequence ID" value="AAL80414.1"/>
    <property type="molecule type" value="Genomic_DNA"/>
</dbReference>
<dbReference type="RefSeq" id="WP_011011404.1">
    <property type="nucleotide sequence ID" value="NZ_CP023154.1"/>
</dbReference>
<dbReference type="SMR" id="Q8U409"/>
<dbReference type="STRING" id="186497.PF0290"/>
<dbReference type="PaxDb" id="186497-PF0290"/>
<dbReference type="KEGG" id="pfu:PF0290"/>
<dbReference type="PATRIC" id="fig|186497.12.peg.302"/>
<dbReference type="eggNOG" id="arCOG00808">
    <property type="taxonomic scope" value="Archaea"/>
</dbReference>
<dbReference type="HOGENOM" id="CLU_001493_0_2_2"/>
<dbReference type="OrthoDB" id="23906at2157"/>
<dbReference type="PhylomeDB" id="Q8U409"/>
<dbReference type="Proteomes" id="UP000001013">
    <property type="component" value="Chromosome"/>
</dbReference>
<dbReference type="GO" id="GO:0005829">
    <property type="term" value="C:cytosol"/>
    <property type="evidence" value="ECO:0007669"/>
    <property type="project" value="TreeGrafter"/>
</dbReference>
<dbReference type="GO" id="GO:0002161">
    <property type="term" value="F:aminoacyl-tRNA deacylase activity"/>
    <property type="evidence" value="ECO:0007669"/>
    <property type="project" value="InterPro"/>
</dbReference>
<dbReference type="GO" id="GO:0005524">
    <property type="term" value="F:ATP binding"/>
    <property type="evidence" value="ECO:0007669"/>
    <property type="project" value="UniProtKB-UniRule"/>
</dbReference>
<dbReference type="GO" id="GO:0004832">
    <property type="term" value="F:valine-tRNA ligase activity"/>
    <property type="evidence" value="ECO:0007669"/>
    <property type="project" value="UniProtKB-UniRule"/>
</dbReference>
<dbReference type="GO" id="GO:0006438">
    <property type="term" value="P:valyl-tRNA aminoacylation"/>
    <property type="evidence" value="ECO:0007669"/>
    <property type="project" value="UniProtKB-UniRule"/>
</dbReference>
<dbReference type="CDD" id="cd07962">
    <property type="entry name" value="Anticodon_Ia_Val"/>
    <property type="match status" value="1"/>
</dbReference>
<dbReference type="CDD" id="cd00817">
    <property type="entry name" value="ValRS_core"/>
    <property type="match status" value="1"/>
</dbReference>
<dbReference type="FunFam" id="1.10.730.10:FF:000033">
    <property type="entry name" value="Valine--tRNA ligase"/>
    <property type="match status" value="1"/>
</dbReference>
<dbReference type="FunFam" id="3.40.50.620:FF:000192">
    <property type="entry name" value="Valine--tRNA ligase"/>
    <property type="match status" value="1"/>
</dbReference>
<dbReference type="Gene3D" id="3.30.720.200">
    <property type="match status" value="1"/>
</dbReference>
<dbReference type="Gene3D" id="3.40.50.620">
    <property type="entry name" value="HUPs"/>
    <property type="match status" value="2"/>
</dbReference>
<dbReference type="Gene3D" id="1.10.730.10">
    <property type="entry name" value="Isoleucyl-tRNA Synthetase, Domain 1"/>
    <property type="match status" value="1"/>
</dbReference>
<dbReference type="Gene3D" id="3.90.740.10">
    <property type="entry name" value="Valyl/Leucyl/Isoleucyl-tRNA synthetase, editing domain"/>
    <property type="match status" value="1"/>
</dbReference>
<dbReference type="HAMAP" id="MF_02005">
    <property type="entry name" value="Val_tRNA_synth_type2"/>
    <property type="match status" value="1"/>
</dbReference>
<dbReference type="InterPro" id="IPR001412">
    <property type="entry name" value="aa-tRNA-synth_I_CS"/>
</dbReference>
<dbReference type="InterPro" id="IPR002300">
    <property type="entry name" value="aa-tRNA-synth_Ia"/>
</dbReference>
<dbReference type="InterPro" id="IPR033705">
    <property type="entry name" value="Anticodon_Ia_Val"/>
</dbReference>
<dbReference type="InterPro" id="IPR013155">
    <property type="entry name" value="M/V/L/I-tRNA-synth_anticd-bd"/>
</dbReference>
<dbReference type="InterPro" id="IPR014729">
    <property type="entry name" value="Rossmann-like_a/b/a_fold"/>
</dbReference>
<dbReference type="InterPro" id="IPR009080">
    <property type="entry name" value="tRNAsynth_Ia_anticodon-bd"/>
</dbReference>
<dbReference type="InterPro" id="IPR009008">
    <property type="entry name" value="Val/Leu/Ile-tRNA-synth_edit"/>
</dbReference>
<dbReference type="InterPro" id="IPR022874">
    <property type="entry name" value="Valine-tRNA_ligase_type_2"/>
</dbReference>
<dbReference type="InterPro" id="IPR002303">
    <property type="entry name" value="Valyl-tRNA_ligase"/>
</dbReference>
<dbReference type="NCBIfam" id="NF009687">
    <property type="entry name" value="PRK13208.1"/>
    <property type="match status" value="1"/>
</dbReference>
<dbReference type="NCBIfam" id="TIGR00422">
    <property type="entry name" value="valS"/>
    <property type="match status" value="1"/>
</dbReference>
<dbReference type="PANTHER" id="PTHR11946:SF93">
    <property type="entry name" value="VALINE--TRNA LIGASE, CHLOROPLASTIC_MITOCHONDRIAL 2"/>
    <property type="match status" value="1"/>
</dbReference>
<dbReference type="PANTHER" id="PTHR11946">
    <property type="entry name" value="VALYL-TRNA SYNTHETASES"/>
    <property type="match status" value="1"/>
</dbReference>
<dbReference type="Pfam" id="PF08264">
    <property type="entry name" value="Anticodon_1"/>
    <property type="match status" value="1"/>
</dbReference>
<dbReference type="Pfam" id="PF19302">
    <property type="entry name" value="DUF5915"/>
    <property type="match status" value="1"/>
</dbReference>
<dbReference type="Pfam" id="PF00133">
    <property type="entry name" value="tRNA-synt_1"/>
    <property type="match status" value="1"/>
</dbReference>
<dbReference type="PRINTS" id="PR00986">
    <property type="entry name" value="TRNASYNTHVAL"/>
</dbReference>
<dbReference type="SUPFAM" id="SSF47323">
    <property type="entry name" value="Anticodon-binding domain of a subclass of class I aminoacyl-tRNA synthetases"/>
    <property type="match status" value="1"/>
</dbReference>
<dbReference type="SUPFAM" id="SSF52374">
    <property type="entry name" value="Nucleotidylyl transferase"/>
    <property type="match status" value="1"/>
</dbReference>
<dbReference type="SUPFAM" id="SSF50677">
    <property type="entry name" value="ValRS/IleRS/LeuRS editing domain"/>
    <property type="match status" value="1"/>
</dbReference>
<dbReference type="PROSITE" id="PS00178">
    <property type="entry name" value="AA_TRNA_LIGASE_I"/>
    <property type="match status" value="1"/>
</dbReference>
<comment type="function">
    <text evidence="1">Catalyzes the attachment of valine to tRNA(Val). As ValRS can inadvertently accommodate and process structurally similar amino acids such as threonine, to avoid such errors, it has a 'posttransfer' editing activity that hydrolyzes mischarged Thr-tRNA(Val) in a tRNA-dependent manner.</text>
</comment>
<comment type="catalytic activity">
    <reaction evidence="1">
        <text>tRNA(Val) + L-valine + ATP = L-valyl-tRNA(Val) + AMP + diphosphate</text>
        <dbReference type="Rhea" id="RHEA:10704"/>
        <dbReference type="Rhea" id="RHEA-COMP:9672"/>
        <dbReference type="Rhea" id="RHEA-COMP:9708"/>
        <dbReference type="ChEBI" id="CHEBI:30616"/>
        <dbReference type="ChEBI" id="CHEBI:33019"/>
        <dbReference type="ChEBI" id="CHEBI:57762"/>
        <dbReference type="ChEBI" id="CHEBI:78442"/>
        <dbReference type="ChEBI" id="CHEBI:78537"/>
        <dbReference type="ChEBI" id="CHEBI:456215"/>
        <dbReference type="EC" id="6.1.1.9"/>
    </reaction>
</comment>
<comment type="subcellular location">
    <subcellularLocation>
        <location evidence="1">Cytoplasm</location>
    </subcellularLocation>
</comment>
<comment type="domain">
    <text evidence="1">ValRS has two distinct active sites: one for aminoacylation and one for editing. The misactivated threonine is translocated from the active site to the editing site.</text>
</comment>
<comment type="similarity">
    <text evidence="1">Belongs to the class-I aminoacyl-tRNA synthetase family. ValS type 2 subfamily.</text>
</comment>
<accession>Q8U409</accession>
<keyword id="KW-0030">Aminoacyl-tRNA synthetase</keyword>
<keyword id="KW-0067">ATP-binding</keyword>
<keyword id="KW-0963">Cytoplasm</keyword>
<keyword id="KW-0436">Ligase</keyword>
<keyword id="KW-0547">Nucleotide-binding</keyword>
<keyword id="KW-0648">Protein biosynthesis</keyword>
<keyword id="KW-1185">Reference proteome</keyword>
<sequence>MLPKNYDPNEIEPKWQKYWLEEKIYKYKLEPDKPSYAIDTPPPFTSGTLHLGHVLSHTWIDIIARYKRMRGYNVLFPQGFDNHGLPTELKVEKEFGISKDQPEEFLKKCIEWTWQAIEKMRAQFIRIGYSADWDLEYHTMDDWYKAAVQKSLLDFYKKGLIYREEHPVYWCPRCRTSLAKAEVGYVEEEGYLYYIKLPLADGSGYIPIATTRPELMPACVAVFVHPDDERYKHLVGKKVKLPIYEREVPILADEDVDPNFGTGAVYNCTYGDEQDIVWQKRYNLPVIIAINEDGTMNENAGPYAGLKIEEARKKIAEDLEKMGLLYKKEKITHRVLRHTERSSCMAPIELLPKKQWFIKVREFTDDIVEVAKKINWYPEDMFLRLKDWAESMDWDWVISRQRVFGTPIPFWICKNGHIIPAREEDLPVDPRFDKPPVEKCPVCGAEIEPVTDVLDCWVDSSITPLIITKWHEAIKGDEEAKKWFEHNFPTALRPQGTDIIRTWAFYTIFRTYMLTGEKPWNDIVINGMVAGPDGRKMSKSYGNVVSPEEVIPKYGADALRLWTALAPPGEDHPFKWEIVDYNFRFLQKLWNIYRFAERHIKDFDYEKYKHIELEPLDRWILSRLHRIIKFATEELEKYRFNLITRELMTFIWHEVADDYIEMIKHRLYGEDEESKLKAKVALYELLYNIMLLLAPFVPHITEELYHHIFKEKIGEKSVHLLQWPEYREDRIDEEAEKIGELAREIVSAMRKYKNSHGMPLNAKLKHVAIYATDSYEMLKVIEKDIAGTMNIERLEIVKGEPQLEEKVVEIKPIYKRIGPRYGKLVPKIVKHLQENAEEIGRRIKEEGKVEFEVEGQKVVLEKEDIEIKKAVFSEGEEVETAVVRDATILFF</sequence>
<organism>
    <name type="scientific">Pyrococcus furiosus (strain ATCC 43587 / DSM 3638 / JCM 8422 / Vc1)</name>
    <dbReference type="NCBI Taxonomy" id="186497"/>
    <lineage>
        <taxon>Archaea</taxon>
        <taxon>Methanobacteriati</taxon>
        <taxon>Methanobacteriota</taxon>
        <taxon>Thermococci</taxon>
        <taxon>Thermococcales</taxon>
        <taxon>Thermococcaceae</taxon>
        <taxon>Pyrococcus</taxon>
    </lineage>
</organism>
<reference key="1">
    <citation type="journal article" date="1999" name="Genetics">
        <title>Divergence of the hyperthermophilic archaea Pyrococcus furiosus and P. horikoshii inferred from complete genomic sequences.</title>
        <authorList>
            <person name="Maeder D.L."/>
            <person name="Weiss R.B."/>
            <person name="Dunn D.M."/>
            <person name="Cherry J.L."/>
            <person name="Gonzalez J.M."/>
            <person name="DiRuggiero J."/>
            <person name="Robb F.T."/>
        </authorList>
    </citation>
    <scope>NUCLEOTIDE SEQUENCE [LARGE SCALE GENOMIC DNA]</scope>
    <source>
        <strain>ATCC 43587 / DSM 3638 / JCM 8422 / Vc1</strain>
    </source>
</reference>
<protein>
    <recommendedName>
        <fullName evidence="1">Valine--tRNA ligase</fullName>
        <ecNumber evidence="1">6.1.1.9</ecNumber>
    </recommendedName>
    <alternativeName>
        <fullName evidence="1">Valyl-tRNA synthetase</fullName>
        <shortName evidence="1">ValRS</shortName>
    </alternativeName>
</protein>
<name>SYV_PYRFU</name>
<feature type="chain" id="PRO_0000224632" description="Valine--tRNA ligase">
    <location>
        <begin position="1"/>
        <end position="891"/>
    </location>
</feature>
<feature type="short sequence motif" description="'HIGH' region">
    <location>
        <begin position="43"/>
        <end position="53"/>
    </location>
</feature>
<feature type="short sequence motif" description="'KMSKS' region">
    <location>
        <begin position="536"/>
        <end position="540"/>
    </location>
</feature>
<feature type="binding site" evidence="1">
    <location>
        <position position="539"/>
    </location>
    <ligand>
        <name>ATP</name>
        <dbReference type="ChEBI" id="CHEBI:30616"/>
    </ligand>
</feature>